<proteinExistence type="inferred from homology"/>
<evidence type="ECO:0000255" key="1">
    <source>
        <dbReference type="HAMAP-Rule" id="MF_00414"/>
    </source>
</evidence>
<feature type="chain" id="PRO_1000050057" description="Probable protein kinase UbiB">
    <location>
        <begin position="1"/>
        <end position="549"/>
    </location>
</feature>
<feature type="transmembrane region" description="Helical" evidence="1">
    <location>
        <begin position="496"/>
        <end position="516"/>
    </location>
</feature>
<feature type="transmembrane region" description="Helical" evidence="1">
    <location>
        <begin position="520"/>
        <end position="540"/>
    </location>
</feature>
<feature type="domain" description="Protein kinase" evidence="1">
    <location>
        <begin position="123"/>
        <end position="501"/>
    </location>
</feature>
<feature type="active site" description="Proton acceptor" evidence="1">
    <location>
        <position position="287"/>
    </location>
</feature>
<feature type="binding site" evidence="1">
    <location>
        <begin position="129"/>
        <end position="137"/>
    </location>
    <ligand>
        <name>ATP</name>
        <dbReference type="ChEBI" id="CHEBI:30616"/>
    </ligand>
</feature>
<feature type="binding site" evidence="1">
    <location>
        <position position="152"/>
    </location>
    <ligand>
        <name>ATP</name>
        <dbReference type="ChEBI" id="CHEBI:30616"/>
    </ligand>
</feature>
<accession>A6WIE7</accession>
<name>UBIB_SHEB8</name>
<protein>
    <recommendedName>
        <fullName evidence="1">Probable protein kinase UbiB</fullName>
        <ecNumber evidence="1">2.7.-.-</ecNumber>
    </recommendedName>
    <alternativeName>
        <fullName evidence="1">Ubiquinone biosynthesis protein UbiB</fullName>
    </alternativeName>
</protein>
<keyword id="KW-0067">ATP-binding</keyword>
<keyword id="KW-0997">Cell inner membrane</keyword>
<keyword id="KW-1003">Cell membrane</keyword>
<keyword id="KW-0418">Kinase</keyword>
<keyword id="KW-0472">Membrane</keyword>
<keyword id="KW-0547">Nucleotide-binding</keyword>
<keyword id="KW-0808">Transferase</keyword>
<keyword id="KW-0812">Transmembrane</keyword>
<keyword id="KW-1133">Transmembrane helix</keyword>
<keyword id="KW-0831">Ubiquinone biosynthesis</keyword>
<organism>
    <name type="scientific">Shewanella baltica (strain OS185)</name>
    <dbReference type="NCBI Taxonomy" id="402882"/>
    <lineage>
        <taxon>Bacteria</taxon>
        <taxon>Pseudomonadati</taxon>
        <taxon>Pseudomonadota</taxon>
        <taxon>Gammaproteobacteria</taxon>
        <taxon>Alteromonadales</taxon>
        <taxon>Shewanellaceae</taxon>
        <taxon>Shewanella</taxon>
    </lineage>
</organism>
<gene>
    <name evidence="1" type="primary">ubiB</name>
    <name type="ordered locus">Shew185_0417</name>
</gene>
<dbReference type="EC" id="2.7.-.-" evidence="1"/>
<dbReference type="EMBL" id="CP000753">
    <property type="protein sequence ID" value="ABS06586.1"/>
    <property type="molecule type" value="Genomic_DNA"/>
</dbReference>
<dbReference type="RefSeq" id="WP_006087111.1">
    <property type="nucleotide sequence ID" value="NC_009665.1"/>
</dbReference>
<dbReference type="SMR" id="A6WIE7"/>
<dbReference type="GeneID" id="11770768"/>
<dbReference type="KEGG" id="sbm:Shew185_0417"/>
<dbReference type="HOGENOM" id="CLU_006533_0_0_6"/>
<dbReference type="UniPathway" id="UPA00232"/>
<dbReference type="GO" id="GO:0005886">
    <property type="term" value="C:plasma membrane"/>
    <property type="evidence" value="ECO:0007669"/>
    <property type="project" value="UniProtKB-SubCell"/>
</dbReference>
<dbReference type="GO" id="GO:0005524">
    <property type="term" value="F:ATP binding"/>
    <property type="evidence" value="ECO:0007669"/>
    <property type="project" value="UniProtKB-KW"/>
</dbReference>
<dbReference type="GO" id="GO:0004672">
    <property type="term" value="F:protein kinase activity"/>
    <property type="evidence" value="ECO:0007669"/>
    <property type="project" value="UniProtKB-UniRule"/>
</dbReference>
<dbReference type="GO" id="GO:0010795">
    <property type="term" value="P:regulation of ubiquinone biosynthetic process"/>
    <property type="evidence" value="ECO:0007669"/>
    <property type="project" value="UniProtKB-UniRule"/>
</dbReference>
<dbReference type="GO" id="GO:0006744">
    <property type="term" value="P:ubiquinone biosynthetic process"/>
    <property type="evidence" value="ECO:0007669"/>
    <property type="project" value="UniProtKB-UniPathway"/>
</dbReference>
<dbReference type="CDD" id="cd13972">
    <property type="entry name" value="UbiB"/>
    <property type="match status" value="1"/>
</dbReference>
<dbReference type="HAMAP" id="MF_00414">
    <property type="entry name" value="UbiB"/>
    <property type="match status" value="1"/>
</dbReference>
<dbReference type="InterPro" id="IPR004147">
    <property type="entry name" value="ABC1_dom"/>
</dbReference>
<dbReference type="InterPro" id="IPR011009">
    <property type="entry name" value="Kinase-like_dom_sf"/>
</dbReference>
<dbReference type="InterPro" id="IPR010232">
    <property type="entry name" value="UbiB"/>
</dbReference>
<dbReference type="InterPro" id="IPR045308">
    <property type="entry name" value="UbiB_bact"/>
</dbReference>
<dbReference type="InterPro" id="IPR050154">
    <property type="entry name" value="UbiB_kinase"/>
</dbReference>
<dbReference type="NCBIfam" id="NF003404">
    <property type="entry name" value="PRK04750.1"/>
    <property type="match status" value="1"/>
</dbReference>
<dbReference type="NCBIfam" id="TIGR01982">
    <property type="entry name" value="UbiB"/>
    <property type="match status" value="1"/>
</dbReference>
<dbReference type="PANTHER" id="PTHR10566">
    <property type="entry name" value="CHAPERONE-ACTIVITY OF BC1 COMPLEX CABC1 -RELATED"/>
    <property type="match status" value="1"/>
</dbReference>
<dbReference type="PANTHER" id="PTHR10566:SF113">
    <property type="entry name" value="PROTEIN ACTIVITY OF BC1 COMPLEX KINASE 7, CHLOROPLASTIC"/>
    <property type="match status" value="1"/>
</dbReference>
<dbReference type="Pfam" id="PF03109">
    <property type="entry name" value="ABC1"/>
    <property type="match status" value="1"/>
</dbReference>
<dbReference type="SUPFAM" id="SSF56112">
    <property type="entry name" value="Protein kinase-like (PK-like)"/>
    <property type="match status" value="1"/>
</dbReference>
<reference key="1">
    <citation type="submission" date="2007-07" db="EMBL/GenBank/DDBJ databases">
        <title>Complete sequence of chromosome of Shewanella baltica OS185.</title>
        <authorList>
            <consortium name="US DOE Joint Genome Institute"/>
            <person name="Copeland A."/>
            <person name="Lucas S."/>
            <person name="Lapidus A."/>
            <person name="Barry K."/>
            <person name="Glavina del Rio T."/>
            <person name="Dalin E."/>
            <person name="Tice H."/>
            <person name="Pitluck S."/>
            <person name="Sims D."/>
            <person name="Brettin T."/>
            <person name="Bruce D."/>
            <person name="Detter J.C."/>
            <person name="Han C."/>
            <person name="Schmutz J."/>
            <person name="Larimer F."/>
            <person name="Land M."/>
            <person name="Hauser L."/>
            <person name="Kyrpides N."/>
            <person name="Mikhailova N."/>
            <person name="Brettar I."/>
            <person name="Rodrigues J."/>
            <person name="Konstantinidis K."/>
            <person name="Tiedje J."/>
            <person name="Richardson P."/>
        </authorList>
    </citation>
    <scope>NUCLEOTIDE SEQUENCE [LARGE SCALE GENOMIC DNA]</scope>
    <source>
        <strain>OS185</strain>
    </source>
</reference>
<comment type="function">
    <text evidence="1">Is probably a protein kinase regulator of UbiI activity which is involved in aerobic coenzyme Q (ubiquinone) biosynthesis.</text>
</comment>
<comment type="pathway">
    <text>Cofactor biosynthesis; ubiquinone biosynthesis [regulation].</text>
</comment>
<comment type="subcellular location">
    <subcellularLocation>
        <location evidence="1">Cell inner membrane</location>
        <topology evidence="1">Multi-pass membrane protein</topology>
    </subcellularLocation>
</comment>
<comment type="similarity">
    <text evidence="1">Belongs to the ABC1 family. UbiB subfamily.</text>
</comment>
<sequence length="549" mass="63364">MTLASIRRGYHVIKTLLQYGLDDVLPPKMTPWYFKLARNSLFWIRNKHKNKPGGERLKLAMQELGPVYIKLGQMLSTRRDLLSDEWASELAMLQDKVPPFDGALARQAIEAELKAPIESLFDDFNETPLASASISQVHTATLKSNGKDVVLKVLRPNVETKIQADLQLMSQTAKLIEYLLGEGNRLRPAEVIEDYRVTILGELNLKLEALNAVKLRNNFLDSDALYVPYVYEEFCYPRLMVMERIYGISVSDIAALKAQGTNFKLLAERGVELFFTQVFRDNFFHADMHPGNIFISRDHPENPYYIGLDCGIMGTLSEVDKRYLAENFLAFFNRDYHRIAQLYIESGWVSEKTDLQAFEQAIKVVCEPMFNKPLDEISFGHVLLELFRTARHFDIVVQPQLVLLEKTLLYIEGLGRQLYPQLDLWQTAKPFLEQWMADQVGPKAMFKKVSTKLPYWADKLPEFPELIYDNLKLGRKLLSSQQQMLDKYLKYQQQAHKSNYLLITSAVLLICGTLLINRDATLWTPYVCLVSGIILWFVGWRSRPKNRKF</sequence>